<proteinExistence type="inferred from homology"/>
<gene>
    <name evidence="1" type="primary">ybeY</name>
    <name type="ordered locus">YPDSF_2634</name>
</gene>
<comment type="function">
    <text evidence="1">Single strand-specific metallo-endoribonuclease involved in late-stage 70S ribosome quality control and in maturation of the 3' terminus of the 16S rRNA.</text>
</comment>
<comment type="cofactor">
    <cofactor evidence="1">
        <name>Zn(2+)</name>
        <dbReference type="ChEBI" id="CHEBI:29105"/>
    </cofactor>
    <text evidence="1">Binds 1 zinc ion.</text>
</comment>
<comment type="subcellular location">
    <subcellularLocation>
        <location evidence="1">Cytoplasm</location>
    </subcellularLocation>
</comment>
<comment type="similarity">
    <text evidence="1">Belongs to the endoribonuclease YbeY family.</text>
</comment>
<protein>
    <recommendedName>
        <fullName evidence="1">Endoribonuclease YbeY</fullName>
        <ecNumber evidence="1">3.1.-.-</ecNumber>
    </recommendedName>
</protein>
<organism>
    <name type="scientific">Yersinia pestis (strain Pestoides F)</name>
    <dbReference type="NCBI Taxonomy" id="386656"/>
    <lineage>
        <taxon>Bacteria</taxon>
        <taxon>Pseudomonadati</taxon>
        <taxon>Pseudomonadota</taxon>
        <taxon>Gammaproteobacteria</taxon>
        <taxon>Enterobacterales</taxon>
        <taxon>Yersiniaceae</taxon>
        <taxon>Yersinia</taxon>
    </lineage>
</organism>
<sequence length="157" mass="17745">MSQVILDLQIACADSQGLPTEGDFQRWLEAVLPLFQPVSEVTIRLVDEAESHDLNLTYRGKDKSTNVLSFPFEAPPEIELPLLGDLIICRQVVEKEAIEQEKALLAHWAHMVVHGSLHLLGYDHIDDEEAEEMELIETEIMHGLGYPDPYISEKDPD</sequence>
<keyword id="KW-0963">Cytoplasm</keyword>
<keyword id="KW-0255">Endonuclease</keyword>
<keyword id="KW-0378">Hydrolase</keyword>
<keyword id="KW-0479">Metal-binding</keyword>
<keyword id="KW-0540">Nuclease</keyword>
<keyword id="KW-0690">Ribosome biogenesis</keyword>
<keyword id="KW-0698">rRNA processing</keyword>
<keyword id="KW-0862">Zinc</keyword>
<dbReference type="EC" id="3.1.-.-" evidence="1"/>
<dbReference type="EMBL" id="CP000668">
    <property type="protein sequence ID" value="ABP41000.1"/>
    <property type="molecule type" value="Genomic_DNA"/>
</dbReference>
<dbReference type="RefSeq" id="WP_002210344.1">
    <property type="nucleotide sequence ID" value="NZ_CP009715.1"/>
</dbReference>
<dbReference type="SMR" id="A4TNY8"/>
<dbReference type="GeneID" id="57976077"/>
<dbReference type="KEGG" id="ypp:YPDSF_2634"/>
<dbReference type="PATRIC" id="fig|386656.14.peg.4161"/>
<dbReference type="GO" id="GO:0005737">
    <property type="term" value="C:cytoplasm"/>
    <property type="evidence" value="ECO:0007669"/>
    <property type="project" value="UniProtKB-SubCell"/>
</dbReference>
<dbReference type="GO" id="GO:0004222">
    <property type="term" value="F:metalloendopeptidase activity"/>
    <property type="evidence" value="ECO:0007669"/>
    <property type="project" value="InterPro"/>
</dbReference>
<dbReference type="GO" id="GO:0004521">
    <property type="term" value="F:RNA endonuclease activity"/>
    <property type="evidence" value="ECO:0007669"/>
    <property type="project" value="UniProtKB-UniRule"/>
</dbReference>
<dbReference type="GO" id="GO:0008270">
    <property type="term" value="F:zinc ion binding"/>
    <property type="evidence" value="ECO:0007669"/>
    <property type="project" value="UniProtKB-UniRule"/>
</dbReference>
<dbReference type="GO" id="GO:0006364">
    <property type="term" value="P:rRNA processing"/>
    <property type="evidence" value="ECO:0007669"/>
    <property type="project" value="UniProtKB-UniRule"/>
</dbReference>
<dbReference type="Gene3D" id="3.40.390.30">
    <property type="entry name" value="Metalloproteases ('zincins'), catalytic domain"/>
    <property type="match status" value="1"/>
</dbReference>
<dbReference type="HAMAP" id="MF_00009">
    <property type="entry name" value="Endoribonucl_YbeY"/>
    <property type="match status" value="1"/>
</dbReference>
<dbReference type="InterPro" id="IPR023091">
    <property type="entry name" value="MetalPrtase_cat_dom_sf_prd"/>
</dbReference>
<dbReference type="InterPro" id="IPR002036">
    <property type="entry name" value="YbeY"/>
</dbReference>
<dbReference type="InterPro" id="IPR020549">
    <property type="entry name" value="YbeY_CS"/>
</dbReference>
<dbReference type="NCBIfam" id="TIGR00043">
    <property type="entry name" value="rRNA maturation RNase YbeY"/>
    <property type="match status" value="1"/>
</dbReference>
<dbReference type="PANTHER" id="PTHR46986">
    <property type="entry name" value="ENDORIBONUCLEASE YBEY, CHLOROPLASTIC"/>
    <property type="match status" value="1"/>
</dbReference>
<dbReference type="PANTHER" id="PTHR46986:SF1">
    <property type="entry name" value="ENDORIBONUCLEASE YBEY, CHLOROPLASTIC"/>
    <property type="match status" value="1"/>
</dbReference>
<dbReference type="Pfam" id="PF02130">
    <property type="entry name" value="YbeY"/>
    <property type="match status" value="1"/>
</dbReference>
<dbReference type="SUPFAM" id="SSF55486">
    <property type="entry name" value="Metalloproteases ('zincins'), catalytic domain"/>
    <property type="match status" value="1"/>
</dbReference>
<dbReference type="PROSITE" id="PS01306">
    <property type="entry name" value="UPF0054"/>
    <property type="match status" value="1"/>
</dbReference>
<name>YBEY_YERPP</name>
<accession>A4TNY8</accession>
<reference key="1">
    <citation type="submission" date="2007-02" db="EMBL/GenBank/DDBJ databases">
        <title>Complete sequence of chromosome of Yersinia pestis Pestoides F.</title>
        <authorList>
            <consortium name="US DOE Joint Genome Institute"/>
            <person name="Copeland A."/>
            <person name="Lucas S."/>
            <person name="Lapidus A."/>
            <person name="Barry K."/>
            <person name="Detter J.C."/>
            <person name="Glavina del Rio T."/>
            <person name="Hammon N."/>
            <person name="Israni S."/>
            <person name="Dalin E."/>
            <person name="Tice H."/>
            <person name="Pitluck S."/>
            <person name="Di Bartolo G."/>
            <person name="Chain P."/>
            <person name="Malfatti S."/>
            <person name="Shin M."/>
            <person name="Vergez L."/>
            <person name="Schmutz J."/>
            <person name="Larimer F."/>
            <person name="Land M."/>
            <person name="Hauser L."/>
            <person name="Worsham P."/>
            <person name="Chu M."/>
            <person name="Bearden S."/>
            <person name="Garcia E."/>
            <person name="Richardson P."/>
        </authorList>
    </citation>
    <scope>NUCLEOTIDE SEQUENCE [LARGE SCALE GENOMIC DNA]</scope>
    <source>
        <strain>Pestoides F</strain>
    </source>
</reference>
<feature type="chain" id="PRO_1000000754" description="Endoribonuclease YbeY">
    <location>
        <begin position="1"/>
        <end position="157"/>
    </location>
</feature>
<feature type="binding site" evidence="1">
    <location>
        <position position="114"/>
    </location>
    <ligand>
        <name>Zn(2+)</name>
        <dbReference type="ChEBI" id="CHEBI:29105"/>
        <note>catalytic</note>
    </ligand>
</feature>
<feature type="binding site" evidence="1">
    <location>
        <position position="118"/>
    </location>
    <ligand>
        <name>Zn(2+)</name>
        <dbReference type="ChEBI" id="CHEBI:29105"/>
        <note>catalytic</note>
    </ligand>
</feature>
<feature type="binding site" evidence="1">
    <location>
        <position position="124"/>
    </location>
    <ligand>
        <name>Zn(2+)</name>
        <dbReference type="ChEBI" id="CHEBI:29105"/>
        <note>catalytic</note>
    </ligand>
</feature>
<evidence type="ECO:0000255" key="1">
    <source>
        <dbReference type="HAMAP-Rule" id="MF_00009"/>
    </source>
</evidence>